<dbReference type="EMBL" id="CP000230">
    <property type="protein sequence ID" value="ABC23489.1"/>
    <property type="molecule type" value="Genomic_DNA"/>
</dbReference>
<dbReference type="RefSeq" id="WP_011390502.1">
    <property type="nucleotide sequence ID" value="NC_007643.1"/>
</dbReference>
<dbReference type="RefSeq" id="YP_427776.1">
    <property type="nucleotide sequence ID" value="NC_007643.1"/>
</dbReference>
<dbReference type="SMR" id="Q2RQV6"/>
<dbReference type="STRING" id="269796.Rru_A2692"/>
<dbReference type="EnsemblBacteria" id="ABC23489">
    <property type="protein sequence ID" value="ABC23489"/>
    <property type="gene ID" value="Rru_A2692"/>
</dbReference>
<dbReference type="KEGG" id="rru:Rru_A2692"/>
<dbReference type="PATRIC" id="fig|269796.9.peg.2799"/>
<dbReference type="eggNOG" id="COG0049">
    <property type="taxonomic scope" value="Bacteria"/>
</dbReference>
<dbReference type="HOGENOM" id="CLU_072226_1_1_5"/>
<dbReference type="PhylomeDB" id="Q2RQV6"/>
<dbReference type="Proteomes" id="UP000001929">
    <property type="component" value="Chromosome"/>
</dbReference>
<dbReference type="GO" id="GO:0015935">
    <property type="term" value="C:small ribosomal subunit"/>
    <property type="evidence" value="ECO:0007669"/>
    <property type="project" value="InterPro"/>
</dbReference>
<dbReference type="GO" id="GO:0019843">
    <property type="term" value="F:rRNA binding"/>
    <property type="evidence" value="ECO:0007669"/>
    <property type="project" value="UniProtKB-UniRule"/>
</dbReference>
<dbReference type="GO" id="GO:0003735">
    <property type="term" value="F:structural constituent of ribosome"/>
    <property type="evidence" value="ECO:0007669"/>
    <property type="project" value="InterPro"/>
</dbReference>
<dbReference type="GO" id="GO:0000049">
    <property type="term" value="F:tRNA binding"/>
    <property type="evidence" value="ECO:0007669"/>
    <property type="project" value="UniProtKB-UniRule"/>
</dbReference>
<dbReference type="GO" id="GO:0006412">
    <property type="term" value="P:translation"/>
    <property type="evidence" value="ECO:0007669"/>
    <property type="project" value="UniProtKB-UniRule"/>
</dbReference>
<dbReference type="CDD" id="cd14869">
    <property type="entry name" value="uS7_Bacteria"/>
    <property type="match status" value="1"/>
</dbReference>
<dbReference type="FunFam" id="1.10.455.10:FF:000001">
    <property type="entry name" value="30S ribosomal protein S7"/>
    <property type="match status" value="1"/>
</dbReference>
<dbReference type="Gene3D" id="1.10.455.10">
    <property type="entry name" value="Ribosomal protein S7 domain"/>
    <property type="match status" value="1"/>
</dbReference>
<dbReference type="HAMAP" id="MF_00480_B">
    <property type="entry name" value="Ribosomal_uS7_B"/>
    <property type="match status" value="1"/>
</dbReference>
<dbReference type="InterPro" id="IPR000235">
    <property type="entry name" value="Ribosomal_uS7"/>
</dbReference>
<dbReference type="InterPro" id="IPR005717">
    <property type="entry name" value="Ribosomal_uS7_bac/org-type"/>
</dbReference>
<dbReference type="InterPro" id="IPR020606">
    <property type="entry name" value="Ribosomal_uS7_CS"/>
</dbReference>
<dbReference type="InterPro" id="IPR023798">
    <property type="entry name" value="Ribosomal_uS7_dom"/>
</dbReference>
<dbReference type="InterPro" id="IPR036823">
    <property type="entry name" value="Ribosomal_uS7_dom_sf"/>
</dbReference>
<dbReference type="NCBIfam" id="TIGR01029">
    <property type="entry name" value="rpsG_bact"/>
    <property type="match status" value="1"/>
</dbReference>
<dbReference type="PANTHER" id="PTHR11205">
    <property type="entry name" value="RIBOSOMAL PROTEIN S7"/>
    <property type="match status" value="1"/>
</dbReference>
<dbReference type="Pfam" id="PF00177">
    <property type="entry name" value="Ribosomal_S7"/>
    <property type="match status" value="1"/>
</dbReference>
<dbReference type="PIRSF" id="PIRSF002122">
    <property type="entry name" value="RPS7p_RPS7a_RPS5e_RPS7o"/>
    <property type="match status" value="1"/>
</dbReference>
<dbReference type="SUPFAM" id="SSF47973">
    <property type="entry name" value="Ribosomal protein S7"/>
    <property type="match status" value="1"/>
</dbReference>
<dbReference type="PROSITE" id="PS00052">
    <property type="entry name" value="RIBOSOMAL_S7"/>
    <property type="match status" value="1"/>
</dbReference>
<reference key="1">
    <citation type="journal article" date="2011" name="Stand. Genomic Sci.">
        <title>Complete genome sequence of Rhodospirillum rubrum type strain (S1).</title>
        <authorList>
            <person name="Munk A.C."/>
            <person name="Copeland A."/>
            <person name="Lucas S."/>
            <person name="Lapidus A."/>
            <person name="Del Rio T.G."/>
            <person name="Barry K."/>
            <person name="Detter J.C."/>
            <person name="Hammon N."/>
            <person name="Israni S."/>
            <person name="Pitluck S."/>
            <person name="Brettin T."/>
            <person name="Bruce D."/>
            <person name="Han C."/>
            <person name="Tapia R."/>
            <person name="Gilna P."/>
            <person name="Schmutz J."/>
            <person name="Larimer F."/>
            <person name="Land M."/>
            <person name="Kyrpides N.C."/>
            <person name="Mavromatis K."/>
            <person name="Richardson P."/>
            <person name="Rohde M."/>
            <person name="Goeker M."/>
            <person name="Klenk H.P."/>
            <person name="Zhang Y."/>
            <person name="Roberts G.P."/>
            <person name="Reslewic S."/>
            <person name="Schwartz D.C."/>
        </authorList>
    </citation>
    <scope>NUCLEOTIDE SEQUENCE [LARGE SCALE GENOMIC DNA]</scope>
    <source>
        <strain>ATCC 11170 / ATH 1.1.1 / DSM 467 / LMG 4362 / NCIMB 8255 / S1</strain>
    </source>
</reference>
<proteinExistence type="inferred from homology"/>
<name>RS7_RHORT</name>
<keyword id="KW-1185">Reference proteome</keyword>
<keyword id="KW-0687">Ribonucleoprotein</keyword>
<keyword id="KW-0689">Ribosomal protein</keyword>
<keyword id="KW-0694">RNA-binding</keyword>
<keyword id="KW-0699">rRNA-binding</keyword>
<keyword id="KW-0820">tRNA-binding</keyword>
<evidence type="ECO:0000255" key="1">
    <source>
        <dbReference type="HAMAP-Rule" id="MF_00480"/>
    </source>
</evidence>
<evidence type="ECO:0000305" key="2"/>
<comment type="function">
    <text evidence="1">One of the primary rRNA binding proteins, it binds directly to 16S rRNA where it nucleates assembly of the head domain of the 30S subunit. Is located at the subunit interface close to the decoding center, probably blocks exit of the E-site tRNA.</text>
</comment>
<comment type="subunit">
    <text evidence="1">Part of the 30S ribosomal subunit. Contacts proteins S9 and S11.</text>
</comment>
<comment type="similarity">
    <text evidence="1">Belongs to the universal ribosomal protein uS7 family.</text>
</comment>
<accession>Q2RQV6</accession>
<organism>
    <name type="scientific">Rhodospirillum rubrum (strain ATCC 11170 / ATH 1.1.1 / DSM 467 / LMG 4362 / NCIMB 8255 / S1)</name>
    <dbReference type="NCBI Taxonomy" id="269796"/>
    <lineage>
        <taxon>Bacteria</taxon>
        <taxon>Pseudomonadati</taxon>
        <taxon>Pseudomonadota</taxon>
        <taxon>Alphaproteobacteria</taxon>
        <taxon>Rhodospirillales</taxon>
        <taxon>Rhodospirillaceae</taxon>
        <taxon>Rhodospirillum</taxon>
    </lineage>
</organism>
<gene>
    <name evidence="1" type="primary">rpsG</name>
    <name type="ordered locus">Rru_A2692</name>
</gene>
<feature type="chain" id="PRO_0000241773" description="Small ribosomal subunit protein uS7">
    <location>
        <begin position="1"/>
        <end position="156"/>
    </location>
</feature>
<protein>
    <recommendedName>
        <fullName evidence="1">Small ribosomal subunit protein uS7</fullName>
    </recommendedName>
    <alternativeName>
        <fullName evidence="2">30S ribosomal protein S7</fullName>
    </alternativeName>
</protein>
<sequence length="156" mass="17743">MSRRRAAEKREVLPDAKFGDLVLAKFINSVMLQGKKAVAEKIVYGAFERIQSKTGQDPVKVFHDALDNVKPSVEVRSRRVGGATYQVPVEVRPDRRQALGLRWLIDFARKRSETTMVDRLTGEFLDAASNRGGAVKKREDTHRMADANKAFSHYRW</sequence>